<reference key="1">
    <citation type="journal article" date="1999" name="FEBS Lett.">
        <title>Differential expression of beta1,3galactosyltransferases in human colon cells derived from adenocarcinomas or normal mucosa.</title>
        <authorList>
            <person name="Bardoni A."/>
            <person name="Valli M."/>
            <person name="Trinchera M."/>
        </authorList>
    </citation>
    <scope>NUCLEOTIDE SEQUENCE [MRNA]</scope>
    <scope>TISSUE SPECIFICITY</scope>
    <source>
        <tissue>Colon adenocarcinoma</tissue>
    </source>
</reference>
<reference key="2">
    <citation type="journal article" date="2004" name="Mol. Biol. Evol.">
        <title>Human-specific amino acid changes found in 103 protein-coding genes.</title>
        <authorList>
            <person name="Kitano T."/>
            <person name="Liu Y.-H."/>
            <person name="Ueda S."/>
            <person name="Saitou N."/>
        </authorList>
    </citation>
    <scope>NUCLEOTIDE SEQUENCE [GENOMIC DNA]</scope>
</reference>
<reference key="3">
    <citation type="journal article" date="2005" name="Nature">
        <title>Generation and annotation of the DNA sequences of human chromosomes 2 and 4.</title>
        <authorList>
            <person name="Hillier L.W."/>
            <person name="Graves T.A."/>
            <person name="Fulton R.S."/>
            <person name="Fulton L.A."/>
            <person name="Pepin K.H."/>
            <person name="Minx P."/>
            <person name="Wagner-McPherson C."/>
            <person name="Layman D."/>
            <person name="Wylie K."/>
            <person name="Sekhon M."/>
            <person name="Becker M.C."/>
            <person name="Fewell G.A."/>
            <person name="Delehaunty K.D."/>
            <person name="Miner T.L."/>
            <person name="Nash W.E."/>
            <person name="Kremitzki C."/>
            <person name="Oddy L."/>
            <person name="Du H."/>
            <person name="Sun H."/>
            <person name="Bradshaw-Cordum H."/>
            <person name="Ali J."/>
            <person name="Carter J."/>
            <person name="Cordes M."/>
            <person name="Harris A."/>
            <person name="Isak A."/>
            <person name="van Brunt A."/>
            <person name="Nguyen C."/>
            <person name="Du F."/>
            <person name="Courtney L."/>
            <person name="Kalicki J."/>
            <person name="Ozersky P."/>
            <person name="Abbott S."/>
            <person name="Armstrong J."/>
            <person name="Belter E.A."/>
            <person name="Caruso L."/>
            <person name="Cedroni M."/>
            <person name="Cotton M."/>
            <person name="Davidson T."/>
            <person name="Desai A."/>
            <person name="Elliott G."/>
            <person name="Erb T."/>
            <person name="Fronick C."/>
            <person name="Gaige T."/>
            <person name="Haakenson W."/>
            <person name="Haglund K."/>
            <person name="Holmes A."/>
            <person name="Harkins R."/>
            <person name="Kim K."/>
            <person name="Kruchowski S.S."/>
            <person name="Strong C.M."/>
            <person name="Grewal N."/>
            <person name="Goyea E."/>
            <person name="Hou S."/>
            <person name="Levy A."/>
            <person name="Martinka S."/>
            <person name="Mead K."/>
            <person name="McLellan M.D."/>
            <person name="Meyer R."/>
            <person name="Randall-Maher J."/>
            <person name="Tomlinson C."/>
            <person name="Dauphin-Kohlberg S."/>
            <person name="Kozlowicz-Reilly A."/>
            <person name="Shah N."/>
            <person name="Swearengen-Shahid S."/>
            <person name="Snider J."/>
            <person name="Strong J.T."/>
            <person name="Thompson J."/>
            <person name="Yoakum M."/>
            <person name="Leonard S."/>
            <person name="Pearman C."/>
            <person name="Trani L."/>
            <person name="Radionenko M."/>
            <person name="Waligorski J.E."/>
            <person name="Wang C."/>
            <person name="Rock S.M."/>
            <person name="Tin-Wollam A.-M."/>
            <person name="Maupin R."/>
            <person name="Latreille P."/>
            <person name="Wendl M.C."/>
            <person name="Yang S.-P."/>
            <person name="Pohl C."/>
            <person name="Wallis J.W."/>
            <person name="Spieth J."/>
            <person name="Bieri T.A."/>
            <person name="Berkowicz N."/>
            <person name="Nelson J.O."/>
            <person name="Osborne J."/>
            <person name="Ding L."/>
            <person name="Meyer R."/>
            <person name="Sabo A."/>
            <person name="Shotland Y."/>
            <person name="Sinha P."/>
            <person name="Wohldmann P.E."/>
            <person name="Cook L.L."/>
            <person name="Hickenbotham M.T."/>
            <person name="Eldred J."/>
            <person name="Williams D."/>
            <person name="Jones T.A."/>
            <person name="She X."/>
            <person name="Ciccarelli F.D."/>
            <person name="Izaurralde E."/>
            <person name="Taylor J."/>
            <person name="Schmutz J."/>
            <person name="Myers R.M."/>
            <person name="Cox D.R."/>
            <person name="Huang X."/>
            <person name="McPherson J.D."/>
            <person name="Mardis E.R."/>
            <person name="Clifton S.W."/>
            <person name="Warren W.C."/>
            <person name="Chinwalla A.T."/>
            <person name="Eddy S.R."/>
            <person name="Marra M.A."/>
            <person name="Ovcharenko I."/>
            <person name="Furey T.S."/>
            <person name="Miller W."/>
            <person name="Eichler E.E."/>
            <person name="Bork P."/>
            <person name="Suyama M."/>
            <person name="Torrents D."/>
            <person name="Waterston R.H."/>
            <person name="Wilson R.K."/>
        </authorList>
    </citation>
    <scope>NUCLEOTIDE SEQUENCE [LARGE SCALE GENOMIC DNA]</scope>
</reference>
<reference key="4">
    <citation type="submission" date="2005-09" db="EMBL/GenBank/DDBJ databases">
        <authorList>
            <person name="Mural R.J."/>
            <person name="Istrail S."/>
            <person name="Sutton G.G."/>
            <person name="Florea L."/>
            <person name="Halpern A.L."/>
            <person name="Mobarry C.M."/>
            <person name="Lippert R."/>
            <person name="Walenz B."/>
            <person name="Shatkay H."/>
            <person name="Dew I."/>
            <person name="Miller J.R."/>
            <person name="Flanigan M.J."/>
            <person name="Edwards N.J."/>
            <person name="Bolanos R."/>
            <person name="Fasulo D."/>
            <person name="Halldorsson B.V."/>
            <person name="Hannenhalli S."/>
            <person name="Turner R."/>
            <person name="Yooseph S."/>
            <person name="Lu F."/>
            <person name="Nusskern D.R."/>
            <person name="Shue B.C."/>
            <person name="Zheng X.H."/>
            <person name="Zhong F."/>
            <person name="Delcher A.L."/>
            <person name="Huson D.H."/>
            <person name="Kravitz S.A."/>
            <person name="Mouchard L."/>
            <person name="Reinert K."/>
            <person name="Remington K.A."/>
            <person name="Clark A.G."/>
            <person name="Waterman M.S."/>
            <person name="Eichler E.E."/>
            <person name="Adams M.D."/>
            <person name="Hunkapiller M.W."/>
            <person name="Myers E.W."/>
            <person name="Venter J.C."/>
        </authorList>
    </citation>
    <scope>NUCLEOTIDE SEQUENCE [LARGE SCALE GENOMIC DNA]</scope>
</reference>
<reference key="5">
    <citation type="journal article" date="2004" name="Genome Res.">
        <title>The status, quality, and expansion of the NIH full-length cDNA project: the Mammalian Gene Collection (MGC).</title>
        <authorList>
            <consortium name="The MGC Project Team"/>
        </authorList>
    </citation>
    <scope>NUCLEOTIDE SEQUENCE [LARGE SCALE MRNA]</scope>
    <source>
        <tissue>Placenta</tissue>
    </source>
</reference>
<reference key="6">
    <citation type="journal article" date="1998" name="J. Biol. Chem.">
        <title>A family of human beta3-galactosyltransferases. Characterization of four members of a UDP-galactose:beta-N-acetyl-glucosamine/beta-N-acetyl-galactosamine beta-1,3-galactosyltransferase family.</title>
        <authorList>
            <person name="Amado M."/>
            <person name="Almeida R."/>
            <person name="Carneiro F."/>
            <person name="Levery S.B."/>
            <person name="Holmes E.H."/>
            <person name="Nomoto M."/>
            <person name="Hollingsworth M.A."/>
            <person name="Hassan H."/>
            <person name="Schwientek T."/>
            <person name="Nielsen P.A."/>
            <person name="Bennett E.P."/>
            <person name="Clausen H."/>
        </authorList>
    </citation>
    <scope>FUNCTION</scope>
    <scope>CATALYTIC ACTIVITY</scope>
    <scope>SUBSTRATE SPECIFICITY</scope>
    <scope>BIOPHYSICOCHEMICAL PROPERTIES</scope>
    <scope>TISSUE SPECIFICITY</scope>
</reference>
<protein>
    <recommendedName>
        <fullName evidence="5">Beta-1,3-galactosyltransferase 1</fullName>
        <shortName>Beta-1,3-GalTase 1</shortName>
        <shortName>Beta3Gal-T1</shortName>
        <shortName>Beta3GalT1</shortName>
        <ecNumber evidence="4">2.4.1.86</ecNumber>
    </recommendedName>
    <alternativeName>
        <fullName>UDP-galactose:beta-N-acetyl-glucosamine-beta-1,3-galactosyltransferase 1</fullName>
    </alternativeName>
</protein>
<organism>
    <name type="scientific">Homo sapiens</name>
    <name type="common">Human</name>
    <dbReference type="NCBI Taxonomy" id="9606"/>
    <lineage>
        <taxon>Eukaryota</taxon>
        <taxon>Metazoa</taxon>
        <taxon>Chordata</taxon>
        <taxon>Craniata</taxon>
        <taxon>Vertebrata</taxon>
        <taxon>Euteleostomi</taxon>
        <taxon>Mammalia</taxon>
        <taxon>Eutheria</taxon>
        <taxon>Euarchontoglires</taxon>
        <taxon>Primates</taxon>
        <taxon>Haplorrhini</taxon>
        <taxon>Catarrhini</taxon>
        <taxon>Hominidae</taxon>
        <taxon>Homo</taxon>
    </lineage>
</organism>
<keyword id="KW-0325">Glycoprotein</keyword>
<keyword id="KW-0328">Glycosyltransferase</keyword>
<keyword id="KW-0333">Golgi apparatus</keyword>
<keyword id="KW-0443">Lipid metabolism</keyword>
<keyword id="KW-0464">Manganese</keyword>
<keyword id="KW-0472">Membrane</keyword>
<keyword id="KW-1267">Proteomics identification</keyword>
<keyword id="KW-1185">Reference proteome</keyword>
<keyword id="KW-0735">Signal-anchor</keyword>
<keyword id="KW-0808">Transferase</keyword>
<keyword id="KW-0812">Transmembrane</keyword>
<keyword id="KW-1133">Transmembrane helix</keyword>
<sequence>MASKVSCLYVLTVVCWASALWYLSITRPTSSYTGSKPFSHLTVARKNFTFGNIRTRPINPHSFEFLINEPNKCEKNIPFLVILISTTHKEFDARQAIRETWGDENNFKGIKIATLFLLGKNADPVLNQMVEQESQIFHDIIVEDFIDSYHNLTLKTLMGMRWVATFCSKAKYVMKTDSDIFVNMDNLIYKLLKPSTKPRRRYFTGYVINGGPIRDVRSKWYMPRDLYPDSNYPPFCSGTGYIFSADVAELIYKTSLHTRLLHLEDVYVGLCLRKLGIHPFQNSGFNHWKMAYSLCRYRRVITVHQISPEEMHRIWNDMSSKKHLRC</sequence>
<name>B3GT1_HUMAN</name>
<proteinExistence type="evidence at protein level"/>
<accession>Q9Y5Z6</accession>
<accession>D3DPB8</accession>
<accession>Q53SS2</accession>
<feature type="chain" id="PRO_0000219145" description="Beta-1,3-galactosyltransferase 1">
    <location>
        <begin position="1"/>
        <end position="326"/>
    </location>
</feature>
<feature type="topological domain" description="Cytoplasmic" evidence="2">
    <location>
        <begin position="1"/>
        <end position="6"/>
    </location>
</feature>
<feature type="transmembrane region" description="Helical; Signal-anchor for type II membrane protein" evidence="2">
    <location>
        <begin position="7"/>
        <end position="26"/>
    </location>
</feature>
<feature type="topological domain" description="Lumenal" evidence="2">
    <location>
        <begin position="27"/>
        <end position="326"/>
    </location>
</feature>
<feature type="glycosylation site" description="N-linked (GlcNAc...) asparagine" evidence="2">
    <location>
        <position position="47"/>
    </location>
</feature>
<feature type="glycosylation site" description="N-linked (GlcNAc...) asparagine" evidence="2">
    <location>
        <position position="151"/>
    </location>
</feature>
<comment type="function">
    <text evidence="4">Beta-1,3-galactosyltransferase that transfers galactose from UDP-alpha-D-galactose to substrates with a terminal beta-N-acetylglucosamine (beta-GlcNAc) residue. Involved in the biosynthesis of the carbohydrate moieties of glycolipids and glycoproteins. Inactive towards substrates with terminal alpha-N-acetylglucosamine (alpha-GlcNAc) or alpha-N-acetylgalactosamine (alpha-GalNAc) residues.</text>
</comment>
<comment type="catalytic activity">
    <reaction evidence="4">
        <text>an N-acetyl-beta-D-glucosaminyl derivative + UDP-alpha-D-galactose = a beta-D-galactosyl-(1-&gt;3)-N-acetyl-beta-D-glucosaminyl derivative + UDP + H(+)</text>
        <dbReference type="Rhea" id="RHEA:53432"/>
        <dbReference type="ChEBI" id="CHEBI:15378"/>
        <dbReference type="ChEBI" id="CHEBI:58223"/>
        <dbReference type="ChEBI" id="CHEBI:61631"/>
        <dbReference type="ChEBI" id="CHEBI:66914"/>
        <dbReference type="ChEBI" id="CHEBI:133506"/>
        <dbReference type="EC" id="2.4.1.86"/>
    </reaction>
    <physiologicalReaction direction="left-to-right" evidence="4">
        <dbReference type="Rhea" id="RHEA:53433"/>
    </physiologicalReaction>
</comment>
<comment type="catalytic activity">
    <reaction evidence="4">
        <text>a beta-D-GlcNAc-(1-&gt;3)-beta-D-Gal-(1-&gt;4)-beta-D-Glc-(1&lt;-&gt;1)-Cer(d18:1(4E)) + UDP-alpha-D-galactose = a beta-D-Gal-(1-&gt;3)-beta-D-GlcNAc-(1-&gt;3)-beta-D-Gal-(1-&gt;4)-beta-D-Glc-(1&lt;-&gt;1')-Cer(d18:1(4E)) + UDP + H(+)</text>
        <dbReference type="Rhea" id="RHEA:16045"/>
        <dbReference type="ChEBI" id="CHEBI:15378"/>
        <dbReference type="ChEBI" id="CHEBI:17103"/>
        <dbReference type="ChEBI" id="CHEBI:17292"/>
        <dbReference type="ChEBI" id="CHEBI:58223"/>
        <dbReference type="ChEBI" id="CHEBI:66914"/>
        <dbReference type="EC" id="2.4.1.86"/>
    </reaction>
    <physiologicalReaction direction="left-to-right" evidence="4">
        <dbReference type="Rhea" id="RHEA:16046"/>
    </physiologicalReaction>
</comment>
<comment type="cofactor">
    <cofactor evidence="1">
        <name>Mn(2+)</name>
        <dbReference type="ChEBI" id="CHEBI:29035"/>
    </cofactor>
</comment>
<comment type="biophysicochemical properties">
    <kinetics>
        <KM evidence="4">90 uM for UDP-alpha-D-galactose</KM>
    </kinetics>
</comment>
<comment type="pathway">
    <text>Protein modification; protein glycosylation.</text>
</comment>
<comment type="subcellular location">
    <subcellularLocation>
        <location evidence="5">Golgi apparatus membrane</location>
        <topology evidence="5">Single-pass type II membrane protein</topology>
    </subcellularLocation>
</comment>
<comment type="tissue specificity">
    <text evidence="3 4">Detected in brain and colon mucosa and to a lesser extent in colon adenocarcinoma cells.</text>
</comment>
<comment type="similarity">
    <text evidence="5">Belongs to the glycosyltransferase 31 family.</text>
</comment>
<comment type="online information" name="Functional Glycomics Gateway - GTase">
    <link uri="http://www.functionalglycomics.org/glycomics/molecule/jsp/glycoEnzyme/viewGlycoEnzyme.jsp?gbpId=gt_hum_429"/>
    <text>Beta-1,3-galactosyltransferase 1</text>
</comment>
<dbReference type="EC" id="2.4.1.86" evidence="4"/>
<dbReference type="EMBL" id="AF117222">
    <property type="protein sequence ID" value="AAD23451.1"/>
    <property type="molecule type" value="mRNA"/>
</dbReference>
<dbReference type="EMBL" id="AB041407">
    <property type="protein sequence ID" value="BAA94492.1"/>
    <property type="molecule type" value="Genomic_DNA"/>
</dbReference>
<dbReference type="EMBL" id="AC016723">
    <property type="protein sequence ID" value="AAY15002.1"/>
    <property type="molecule type" value="Genomic_DNA"/>
</dbReference>
<dbReference type="EMBL" id="CH471058">
    <property type="protein sequence ID" value="EAX11307.1"/>
    <property type="molecule type" value="Genomic_DNA"/>
</dbReference>
<dbReference type="EMBL" id="BC101545">
    <property type="protein sequence ID" value="AAI01546.1"/>
    <property type="molecule type" value="mRNA"/>
</dbReference>
<dbReference type="EMBL" id="BC104813">
    <property type="protein sequence ID" value="AAI04814.1"/>
    <property type="molecule type" value="mRNA"/>
</dbReference>
<dbReference type="CCDS" id="CCDS2227.1"/>
<dbReference type="RefSeq" id="NP_066191.1">
    <property type="nucleotide sequence ID" value="NM_020981.4"/>
</dbReference>
<dbReference type="RefSeq" id="XP_005246988.1">
    <property type="nucleotide sequence ID" value="XM_005246931.3"/>
</dbReference>
<dbReference type="RefSeq" id="XP_006712882.1">
    <property type="nucleotide sequence ID" value="XM_006712819.4"/>
</dbReference>
<dbReference type="RefSeq" id="XP_011510387.1">
    <property type="nucleotide sequence ID" value="XM_011512085.3"/>
</dbReference>
<dbReference type="RefSeq" id="XP_047302115.1">
    <property type="nucleotide sequence ID" value="XM_047446159.1"/>
</dbReference>
<dbReference type="RefSeq" id="XP_047302116.1">
    <property type="nucleotide sequence ID" value="XM_047446160.1"/>
</dbReference>
<dbReference type="RefSeq" id="XP_054200307.1">
    <property type="nucleotide sequence ID" value="XM_054344332.1"/>
</dbReference>
<dbReference type="RefSeq" id="XP_054200308.1">
    <property type="nucleotide sequence ID" value="XM_054344333.1"/>
</dbReference>
<dbReference type="RefSeq" id="XP_054200309.1">
    <property type="nucleotide sequence ID" value="XM_054344334.1"/>
</dbReference>
<dbReference type="RefSeq" id="XP_054200310.1">
    <property type="nucleotide sequence ID" value="XM_054344335.1"/>
</dbReference>
<dbReference type="SMR" id="Q9Y5Z6"/>
<dbReference type="BioGRID" id="114251">
    <property type="interactions" value="2"/>
</dbReference>
<dbReference type="FunCoup" id="Q9Y5Z6">
    <property type="interactions" value="28"/>
</dbReference>
<dbReference type="STRING" id="9606.ENSP00000376456"/>
<dbReference type="BindingDB" id="Q9Y5Z6"/>
<dbReference type="ChEMBL" id="CHEMBL2321634"/>
<dbReference type="SwissLipids" id="SLP:000000774"/>
<dbReference type="CAZy" id="GT31">
    <property type="family name" value="Glycosyltransferase Family 31"/>
</dbReference>
<dbReference type="GlyCosmos" id="Q9Y5Z6">
    <property type="glycosylation" value="2 sites, No reported glycans"/>
</dbReference>
<dbReference type="GlyGen" id="Q9Y5Z6">
    <property type="glycosylation" value="2 sites, 1 N-linked glycan (1 site)"/>
</dbReference>
<dbReference type="iPTMnet" id="Q9Y5Z6"/>
<dbReference type="PhosphoSitePlus" id="Q9Y5Z6"/>
<dbReference type="SwissPalm" id="Q9Y5Z6"/>
<dbReference type="BioMuta" id="B3GALT1"/>
<dbReference type="DMDM" id="61212254"/>
<dbReference type="jPOST" id="Q9Y5Z6"/>
<dbReference type="MassIVE" id="Q9Y5Z6"/>
<dbReference type="PaxDb" id="9606-ENSP00000376456"/>
<dbReference type="PeptideAtlas" id="Q9Y5Z6"/>
<dbReference type="ProteomicsDB" id="86553"/>
<dbReference type="Antibodypedia" id="33791">
    <property type="antibodies" value="90 antibodies from 20 providers"/>
</dbReference>
<dbReference type="DNASU" id="8708"/>
<dbReference type="Ensembl" id="ENST00000392690.4">
    <property type="protein sequence ID" value="ENSP00000376456.2"/>
    <property type="gene ID" value="ENSG00000172318.6"/>
</dbReference>
<dbReference type="GeneID" id="8708"/>
<dbReference type="KEGG" id="hsa:8708"/>
<dbReference type="MANE-Select" id="ENST00000392690.4">
    <property type="protein sequence ID" value="ENSP00000376456.2"/>
    <property type="RefSeq nucleotide sequence ID" value="NM_020981.4"/>
    <property type="RefSeq protein sequence ID" value="NP_066191.1"/>
</dbReference>
<dbReference type="UCSC" id="uc061pgb.1">
    <property type="organism name" value="human"/>
</dbReference>
<dbReference type="AGR" id="HGNC:916"/>
<dbReference type="CTD" id="8708"/>
<dbReference type="DisGeNET" id="8708"/>
<dbReference type="GeneCards" id="B3GALT1"/>
<dbReference type="HGNC" id="HGNC:916">
    <property type="gene designation" value="B3GALT1"/>
</dbReference>
<dbReference type="HPA" id="ENSG00000172318">
    <property type="expression patterns" value="Tissue enhanced (brain, skeletal muscle, tongue)"/>
</dbReference>
<dbReference type="MIM" id="603093">
    <property type="type" value="gene"/>
</dbReference>
<dbReference type="neXtProt" id="NX_Q9Y5Z6"/>
<dbReference type="OpenTargets" id="ENSG00000172318"/>
<dbReference type="PharmGKB" id="PA25209"/>
<dbReference type="VEuPathDB" id="HostDB:ENSG00000172318"/>
<dbReference type="eggNOG" id="KOG2287">
    <property type="taxonomic scope" value="Eukaryota"/>
</dbReference>
<dbReference type="GeneTree" id="ENSGT00940000156219"/>
<dbReference type="HOGENOM" id="CLU_036849_2_4_1"/>
<dbReference type="InParanoid" id="Q9Y5Z6"/>
<dbReference type="OMA" id="MPRDVYP"/>
<dbReference type="OrthoDB" id="5957813at2759"/>
<dbReference type="PAN-GO" id="Q9Y5Z6">
    <property type="GO annotations" value="3 GO annotations based on evolutionary models"/>
</dbReference>
<dbReference type="PhylomeDB" id="Q9Y5Z6"/>
<dbReference type="TreeFam" id="TF318639"/>
<dbReference type="BioCyc" id="MetaCyc:ENSG00000172318-MONOMER"/>
<dbReference type="BRENDA" id="2.4.1.134">
    <property type="organism ID" value="2681"/>
</dbReference>
<dbReference type="PathwayCommons" id="Q9Y5Z6"/>
<dbReference type="Reactome" id="R-HSA-9037629">
    <property type="pathway name" value="Lewis blood group biosynthesis"/>
</dbReference>
<dbReference type="SABIO-RK" id="Q9Y5Z6"/>
<dbReference type="UniPathway" id="UPA00378"/>
<dbReference type="BioGRID-ORCS" id="8708">
    <property type="hits" value="15 hits in 1153 CRISPR screens"/>
</dbReference>
<dbReference type="ChiTaRS" id="B3GALT1">
    <property type="organism name" value="human"/>
</dbReference>
<dbReference type="GenomeRNAi" id="8708"/>
<dbReference type="Pharos" id="Q9Y5Z6">
    <property type="development level" value="Tbio"/>
</dbReference>
<dbReference type="PRO" id="PR:Q9Y5Z6"/>
<dbReference type="Proteomes" id="UP000005640">
    <property type="component" value="Chromosome 2"/>
</dbReference>
<dbReference type="RNAct" id="Q9Y5Z6">
    <property type="molecule type" value="protein"/>
</dbReference>
<dbReference type="Bgee" id="ENSG00000172318">
    <property type="expression patterns" value="Expressed in cortical plate and 89 other cell types or tissues"/>
</dbReference>
<dbReference type="GO" id="GO:0000139">
    <property type="term" value="C:Golgi membrane"/>
    <property type="evidence" value="ECO:0000318"/>
    <property type="project" value="GO_Central"/>
</dbReference>
<dbReference type="GO" id="GO:0016020">
    <property type="term" value="C:membrane"/>
    <property type="evidence" value="ECO:0000303"/>
    <property type="project" value="UniProtKB"/>
</dbReference>
<dbReference type="GO" id="GO:0008499">
    <property type="term" value="F:N-acetyl-beta-D-glucosaminide beta-(1,3)-galactosyltransferase activity"/>
    <property type="evidence" value="ECO:0000314"/>
    <property type="project" value="UniProtKB"/>
</dbReference>
<dbReference type="GO" id="GO:0006682">
    <property type="term" value="P:galactosylceramide biosynthetic process"/>
    <property type="evidence" value="ECO:0000314"/>
    <property type="project" value="BHF-UCL"/>
</dbReference>
<dbReference type="GO" id="GO:0030259">
    <property type="term" value="P:lipid glycosylation"/>
    <property type="evidence" value="ECO:0000314"/>
    <property type="project" value="UniProtKB"/>
</dbReference>
<dbReference type="GO" id="GO:0009312">
    <property type="term" value="P:oligosaccharide biosynthetic process"/>
    <property type="evidence" value="ECO:0000314"/>
    <property type="project" value="UniProtKB"/>
</dbReference>
<dbReference type="GO" id="GO:0006493">
    <property type="term" value="P:protein O-linked glycosylation"/>
    <property type="evidence" value="ECO:0000318"/>
    <property type="project" value="GO_Central"/>
</dbReference>
<dbReference type="FunFam" id="3.90.550.50:FF:000001">
    <property type="entry name" value="Hexosyltransferase"/>
    <property type="match status" value="1"/>
</dbReference>
<dbReference type="Gene3D" id="3.90.550.50">
    <property type="match status" value="1"/>
</dbReference>
<dbReference type="InterPro" id="IPR002659">
    <property type="entry name" value="Glyco_trans_31"/>
</dbReference>
<dbReference type="InterPro" id="IPR029044">
    <property type="entry name" value="Nucleotide-diphossugar_trans"/>
</dbReference>
<dbReference type="PANTHER" id="PTHR11214:SF20">
    <property type="entry name" value="BETA-1,3-GALACTOSYLTRANSFERASE 1"/>
    <property type="match status" value="1"/>
</dbReference>
<dbReference type="PANTHER" id="PTHR11214">
    <property type="entry name" value="BETA-1,3-N-ACETYLGLUCOSAMINYLTRANSFERASE"/>
    <property type="match status" value="1"/>
</dbReference>
<dbReference type="Pfam" id="PF01762">
    <property type="entry name" value="Galactosyl_T"/>
    <property type="match status" value="1"/>
</dbReference>
<dbReference type="SUPFAM" id="SSF53448">
    <property type="entry name" value="Nucleotide-diphospho-sugar transferases"/>
    <property type="match status" value="1"/>
</dbReference>
<evidence type="ECO:0000250" key="1"/>
<evidence type="ECO:0000255" key="2"/>
<evidence type="ECO:0000269" key="3">
    <source>
    </source>
</evidence>
<evidence type="ECO:0000269" key="4">
    <source>
    </source>
</evidence>
<evidence type="ECO:0000305" key="5"/>
<evidence type="ECO:0000312" key="6">
    <source>
        <dbReference type="HGNC" id="HGNC:916"/>
    </source>
</evidence>
<gene>
    <name evidence="6" type="primary">B3GALT1</name>
</gene>